<proteinExistence type="evidence at transcript level"/>
<accession>Q9ZPV7</accession>
<accession>A1A6K2</accession>
<gene>
    <name type="ordered locus">At2g18240</name>
    <name type="ORF">T30D6.25</name>
</gene>
<evidence type="ECO:0000250" key="1"/>
<evidence type="ECO:0000255" key="2"/>
<evidence type="ECO:0000256" key="3">
    <source>
        <dbReference type="SAM" id="MobiDB-lite"/>
    </source>
</evidence>
<evidence type="ECO:0000303" key="4">
    <source ref="5"/>
</evidence>
<evidence type="ECO:0000305" key="5"/>
<sequence>MEDEPGSENEADTIVASPLAKWRIEFSKSFQNYLDRSAPNIVRRWLVTLVAAVIYIYRVYSVYGYFVISYGLATYILNLLIGFLSPKVDPELEALDPDSLPVDESDEYKPFVRRLPEFKFWYAATKAFVVAFVMTFFSFLDVPVFWPILLCYWLVLYSLTMKRLIVHMFKYRYFPFDVRKPVKLLKFLVNSVLTFLRLKKGDGGDDRPSSSNSSQGNEKQD</sequence>
<feature type="chain" id="PRO_0000415611" description="Protein RER1D">
    <location>
        <begin position="1"/>
        <end position="221"/>
    </location>
</feature>
<feature type="transmembrane region" description="Helical" evidence="2">
    <location>
        <begin position="41"/>
        <end position="58"/>
    </location>
</feature>
<feature type="transmembrane region" description="Helical" evidence="2">
    <location>
        <begin position="64"/>
        <end position="84"/>
    </location>
</feature>
<feature type="transmembrane region" description="Helical" evidence="2">
    <location>
        <begin position="128"/>
        <end position="148"/>
    </location>
</feature>
<feature type="transmembrane region" description="Helical" evidence="2">
    <location>
        <begin position="149"/>
        <end position="169"/>
    </location>
</feature>
<feature type="region of interest" description="Disordered" evidence="3">
    <location>
        <begin position="200"/>
        <end position="221"/>
    </location>
</feature>
<feature type="compositionally biased region" description="Polar residues" evidence="3">
    <location>
        <begin position="209"/>
        <end position="221"/>
    </location>
</feature>
<feature type="splice variant" id="VSP_042303" description="In isoform 2." evidence="4">
    <location>
        <position position="199"/>
    </location>
</feature>
<protein>
    <recommendedName>
        <fullName>Protein RER1D</fullName>
        <shortName>AtRER1D</shortName>
    </recommendedName>
</protein>
<reference key="1">
    <citation type="journal article" date="1999" name="Nature">
        <title>Sequence and analysis of chromosome 2 of the plant Arabidopsis thaliana.</title>
        <authorList>
            <person name="Lin X."/>
            <person name="Kaul S."/>
            <person name="Rounsley S.D."/>
            <person name="Shea T.P."/>
            <person name="Benito M.-I."/>
            <person name="Town C.D."/>
            <person name="Fujii C.Y."/>
            <person name="Mason T.M."/>
            <person name="Bowman C.L."/>
            <person name="Barnstead M.E."/>
            <person name="Feldblyum T.V."/>
            <person name="Buell C.R."/>
            <person name="Ketchum K.A."/>
            <person name="Lee J.J."/>
            <person name="Ronning C.M."/>
            <person name="Koo H.L."/>
            <person name="Moffat K.S."/>
            <person name="Cronin L.A."/>
            <person name="Shen M."/>
            <person name="Pai G."/>
            <person name="Van Aken S."/>
            <person name="Umayam L."/>
            <person name="Tallon L.J."/>
            <person name="Gill J.E."/>
            <person name="Adams M.D."/>
            <person name="Carrera A.J."/>
            <person name="Creasy T.H."/>
            <person name="Goodman H.M."/>
            <person name="Somerville C.R."/>
            <person name="Copenhaver G.P."/>
            <person name="Preuss D."/>
            <person name="Nierman W.C."/>
            <person name="White O."/>
            <person name="Eisen J.A."/>
            <person name="Salzberg S.L."/>
            <person name="Fraser C.M."/>
            <person name="Venter J.C."/>
        </authorList>
    </citation>
    <scope>NUCLEOTIDE SEQUENCE [LARGE SCALE GENOMIC DNA]</scope>
    <source>
        <strain>cv. Columbia</strain>
    </source>
</reference>
<reference key="2">
    <citation type="journal article" date="2017" name="Plant J.">
        <title>Araport11: a complete reannotation of the Arabidopsis thaliana reference genome.</title>
        <authorList>
            <person name="Cheng C.Y."/>
            <person name="Krishnakumar V."/>
            <person name="Chan A.P."/>
            <person name="Thibaud-Nissen F."/>
            <person name="Schobel S."/>
            <person name="Town C.D."/>
        </authorList>
    </citation>
    <scope>GENOME REANNOTATION</scope>
    <source>
        <strain>cv. Columbia</strain>
    </source>
</reference>
<reference key="3">
    <citation type="journal article" date="2002" name="Science">
        <title>Functional annotation of a full-length Arabidopsis cDNA collection.</title>
        <authorList>
            <person name="Seki M."/>
            <person name="Narusaka M."/>
            <person name="Kamiya A."/>
            <person name="Ishida J."/>
            <person name="Satou M."/>
            <person name="Sakurai T."/>
            <person name="Nakajima M."/>
            <person name="Enju A."/>
            <person name="Akiyama K."/>
            <person name="Oono Y."/>
            <person name="Muramatsu M."/>
            <person name="Hayashizaki Y."/>
            <person name="Kawai J."/>
            <person name="Carninci P."/>
            <person name="Itoh M."/>
            <person name="Ishii Y."/>
            <person name="Arakawa T."/>
            <person name="Shibata K."/>
            <person name="Shinagawa A."/>
            <person name="Shinozaki K."/>
        </authorList>
    </citation>
    <scope>NUCLEOTIDE SEQUENCE [LARGE SCALE MRNA] (ISOFORM 1)</scope>
    <source>
        <strain>cv. Columbia</strain>
    </source>
</reference>
<reference key="4">
    <citation type="submission" date="2006-07" db="EMBL/GenBank/DDBJ databases">
        <title>Large-scale analysis of RIKEN Arabidopsis full-length (RAFL) cDNAs.</title>
        <authorList>
            <person name="Totoki Y."/>
            <person name="Seki M."/>
            <person name="Ishida J."/>
            <person name="Nakajima M."/>
            <person name="Enju A."/>
            <person name="Kamiya A."/>
            <person name="Narusaka M."/>
            <person name="Shin-i T."/>
            <person name="Nakagawa M."/>
            <person name="Sakamoto N."/>
            <person name="Oishi K."/>
            <person name="Kohara Y."/>
            <person name="Kobayashi M."/>
            <person name="Toyoda A."/>
            <person name="Sakaki Y."/>
            <person name="Sakurai T."/>
            <person name="Iida K."/>
            <person name="Akiyama K."/>
            <person name="Satou M."/>
            <person name="Toyoda T."/>
            <person name="Konagaya A."/>
            <person name="Carninci P."/>
            <person name="Kawai J."/>
            <person name="Hayashizaki Y."/>
            <person name="Shinozaki K."/>
        </authorList>
    </citation>
    <scope>NUCLEOTIDE SEQUENCE [LARGE SCALE MRNA] (ISOFORM 1)</scope>
    <source>
        <strain>cv. Columbia</strain>
    </source>
</reference>
<reference key="5">
    <citation type="submission" date="2006-12" db="EMBL/GenBank/DDBJ databases">
        <title>Arabidopsis ORF clones.</title>
        <authorList>
            <person name="Bautista V.R."/>
            <person name="Kim C.J."/>
            <person name="Chen H."/>
            <person name="Quinitio C."/>
            <person name="Ecker J.R."/>
        </authorList>
    </citation>
    <scope>NUCLEOTIDE SEQUENCE [LARGE SCALE MRNA] (ISOFORM 2)</scope>
</reference>
<reference key="6">
    <citation type="submission" date="2007-01" db="EMBL/GenBank/DDBJ databases">
        <title>Arabidopsis ORF clones.</title>
        <authorList>
            <person name="Bautista V.R."/>
            <person name="Kim C.J."/>
            <person name="Chen H."/>
            <person name="Wu S.Y."/>
            <person name="De Los Reyes C."/>
            <person name="Ecker J.R."/>
        </authorList>
    </citation>
    <scope>NUCLEOTIDE SEQUENCE [LARGE SCALE MRNA] (ISOFORM 1)</scope>
    <source>
        <strain>cv. Columbia</strain>
    </source>
</reference>
<dbReference type="EMBL" id="AC006439">
    <property type="protein sequence ID" value="AAD15512.2"/>
    <property type="molecule type" value="Genomic_DNA"/>
</dbReference>
<dbReference type="EMBL" id="CP002685">
    <property type="protein sequence ID" value="AEC06743.1"/>
    <property type="molecule type" value="Genomic_DNA"/>
</dbReference>
<dbReference type="EMBL" id="CP002685">
    <property type="protein sequence ID" value="AEC06744.1"/>
    <property type="molecule type" value="Genomic_DNA"/>
</dbReference>
<dbReference type="EMBL" id="AK118500">
    <property type="protein sequence ID" value="BAC43104.1"/>
    <property type="molecule type" value="mRNA"/>
</dbReference>
<dbReference type="EMBL" id="AK228424">
    <property type="protein sequence ID" value="BAF00357.1"/>
    <property type="molecule type" value="mRNA"/>
</dbReference>
<dbReference type="EMBL" id="BT029522">
    <property type="protein sequence ID" value="ABL66778.1"/>
    <property type="molecule type" value="mRNA"/>
</dbReference>
<dbReference type="EMBL" id="BT030063">
    <property type="protein sequence ID" value="ABN04801.1"/>
    <property type="molecule type" value="mRNA"/>
</dbReference>
<dbReference type="PIR" id="A84562">
    <property type="entry name" value="A84562"/>
</dbReference>
<dbReference type="RefSeq" id="NP_565431.1">
    <molecule id="Q9ZPV7-1"/>
    <property type="nucleotide sequence ID" value="NM_127381.4"/>
</dbReference>
<dbReference type="RefSeq" id="NP_849974.1">
    <molecule id="Q9ZPV7-2"/>
    <property type="nucleotide sequence ID" value="NM_179643.1"/>
</dbReference>
<dbReference type="BioGRID" id="1696">
    <property type="interactions" value="4"/>
</dbReference>
<dbReference type="FunCoup" id="Q9ZPV7">
    <property type="interactions" value="1764"/>
</dbReference>
<dbReference type="IntAct" id="Q9ZPV7">
    <property type="interactions" value="4"/>
</dbReference>
<dbReference type="STRING" id="3702.Q9ZPV7"/>
<dbReference type="PaxDb" id="3702-AT2G18240.1"/>
<dbReference type="ProteomicsDB" id="234766">
    <molecule id="Q9ZPV7-1"/>
</dbReference>
<dbReference type="EnsemblPlants" id="AT2G18240.1">
    <molecule id="Q9ZPV7-1"/>
    <property type="protein sequence ID" value="AT2G18240.1"/>
    <property type="gene ID" value="AT2G18240"/>
</dbReference>
<dbReference type="EnsemblPlants" id="AT2G18240.2">
    <molecule id="Q9ZPV7-2"/>
    <property type="protein sequence ID" value="AT2G18240.2"/>
    <property type="gene ID" value="AT2G18240"/>
</dbReference>
<dbReference type="GeneID" id="816339"/>
<dbReference type="Gramene" id="AT2G18240.1">
    <molecule id="Q9ZPV7-1"/>
    <property type="protein sequence ID" value="AT2G18240.1"/>
    <property type="gene ID" value="AT2G18240"/>
</dbReference>
<dbReference type="Gramene" id="AT2G18240.2">
    <molecule id="Q9ZPV7-2"/>
    <property type="protein sequence ID" value="AT2G18240.2"/>
    <property type="gene ID" value="AT2G18240"/>
</dbReference>
<dbReference type="KEGG" id="ath:AT2G18240"/>
<dbReference type="Araport" id="AT2G18240"/>
<dbReference type="TAIR" id="AT2G18240"/>
<dbReference type="eggNOG" id="KOG1688">
    <property type="taxonomic scope" value="Eukaryota"/>
</dbReference>
<dbReference type="HOGENOM" id="CLU_074889_1_1_1"/>
<dbReference type="InParanoid" id="Q9ZPV7"/>
<dbReference type="OMA" id="EGDGYTM"/>
<dbReference type="OrthoDB" id="448250at2759"/>
<dbReference type="PhylomeDB" id="Q9ZPV7"/>
<dbReference type="PRO" id="PR:Q9ZPV7"/>
<dbReference type="Proteomes" id="UP000006548">
    <property type="component" value="Chromosome 2"/>
</dbReference>
<dbReference type="ExpressionAtlas" id="Q9ZPV7">
    <property type="expression patterns" value="baseline and differential"/>
</dbReference>
<dbReference type="GO" id="GO:0005737">
    <property type="term" value="C:cytoplasm"/>
    <property type="evidence" value="ECO:0007669"/>
    <property type="project" value="UniProtKB-ARBA"/>
</dbReference>
<dbReference type="GO" id="GO:0043231">
    <property type="term" value="C:intracellular membrane-bounded organelle"/>
    <property type="evidence" value="ECO:0007669"/>
    <property type="project" value="UniProtKB-ARBA"/>
</dbReference>
<dbReference type="GO" id="GO:0016020">
    <property type="term" value="C:membrane"/>
    <property type="evidence" value="ECO:0007669"/>
    <property type="project" value="UniProtKB-SubCell"/>
</dbReference>
<dbReference type="InterPro" id="IPR004932">
    <property type="entry name" value="Rer1"/>
</dbReference>
<dbReference type="PANTHER" id="PTHR10743">
    <property type="entry name" value="PROTEIN RER1"/>
    <property type="match status" value="1"/>
</dbReference>
<dbReference type="PANTHER" id="PTHR10743:SF0">
    <property type="entry name" value="PROTEIN RER1"/>
    <property type="match status" value="1"/>
</dbReference>
<dbReference type="Pfam" id="PF03248">
    <property type="entry name" value="Rer1"/>
    <property type="match status" value="1"/>
</dbReference>
<name>RER1D_ARATH</name>
<organism>
    <name type="scientific">Arabidopsis thaliana</name>
    <name type="common">Mouse-ear cress</name>
    <dbReference type="NCBI Taxonomy" id="3702"/>
    <lineage>
        <taxon>Eukaryota</taxon>
        <taxon>Viridiplantae</taxon>
        <taxon>Streptophyta</taxon>
        <taxon>Embryophyta</taxon>
        <taxon>Tracheophyta</taxon>
        <taxon>Spermatophyta</taxon>
        <taxon>Magnoliopsida</taxon>
        <taxon>eudicotyledons</taxon>
        <taxon>Gunneridae</taxon>
        <taxon>Pentapetalae</taxon>
        <taxon>rosids</taxon>
        <taxon>malvids</taxon>
        <taxon>Brassicales</taxon>
        <taxon>Brassicaceae</taxon>
        <taxon>Camelineae</taxon>
        <taxon>Arabidopsis</taxon>
    </lineage>
</organism>
<comment type="function">
    <text evidence="1">Involved in the retrieval of endoplasmic reticulum membrane proteins from the early Golgi compartment.</text>
</comment>
<comment type="subcellular location">
    <subcellularLocation>
        <location evidence="5">Membrane</location>
        <topology evidence="5">Multi-pass membrane protein</topology>
    </subcellularLocation>
</comment>
<comment type="alternative products">
    <event type="alternative splicing"/>
    <isoform>
        <id>Q9ZPV7-1</id>
        <name>1</name>
        <sequence type="displayed"/>
    </isoform>
    <isoform>
        <id>Q9ZPV7-2</id>
        <name>2</name>
        <sequence type="described" ref="VSP_042303"/>
    </isoform>
</comment>
<comment type="miscellaneous">
    <molecule>Isoform 2</molecule>
    <text evidence="5">May be due to a competing acceptor splice site.</text>
</comment>
<comment type="similarity">
    <text evidence="5">Belongs to the RER1 family.</text>
</comment>
<keyword id="KW-0025">Alternative splicing</keyword>
<keyword id="KW-0472">Membrane</keyword>
<keyword id="KW-1185">Reference proteome</keyword>
<keyword id="KW-0812">Transmembrane</keyword>
<keyword id="KW-1133">Transmembrane helix</keyword>